<dbReference type="EMBL" id="AJ566902">
    <property type="protein sequence ID" value="CAD98727.2"/>
    <property type="molecule type" value="Genomic_DNA"/>
</dbReference>
<dbReference type="EMBL" id="CR382131">
    <property type="protein sequence ID" value="CAG80343.1"/>
    <property type="molecule type" value="Genomic_DNA"/>
</dbReference>
<dbReference type="RefSeq" id="XP_504739.1">
    <property type="nucleotide sequence ID" value="XM_504739.1"/>
</dbReference>
<dbReference type="FunCoup" id="Q7Z8R5">
    <property type="interactions" value="1"/>
</dbReference>
<dbReference type="STRING" id="284591.Q7Z8R5"/>
<dbReference type="KEGG" id="yli:2911587"/>
<dbReference type="InParanoid" id="Q7Z8R5"/>
<dbReference type="OrthoDB" id="121487at4891"/>
<dbReference type="Proteomes" id="UP000001300">
    <property type="component" value="Chromosome E"/>
</dbReference>
<dbReference type="GO" id="GO:0032153">
    <property type="term" value="C:cell division site"/>
    <property type="evidence" value="ECO:0000318"/>
    <property type="project" value="GO_Central"/>
</dbReference>
<dbReference type="GO" id="GO:0035838">
    <property type="term" value="C:growing cell tip"/>
    <property type="evidence" value="ECO:0000318"/>
    <property type="project" value="GO_Central"/>
</dbReference>
<dbReference type="GO" id="GO:0005886">
    <property type="term" value="C:plasma membrane"/>
    <property type="evidence" value="ECO:0000318"/>
    <property type="project" value="GO_Central"/>
</dbReference>
<dbReference type="InterPro" id="IPR051380">
    <property type="entry name" value="pH-response_reg_palI/RIM9"/>
</dbReference>
<dbReference type="InterPro" id="IPR009571">
    <property type="entry name" value="SUR7/Rim9-like_fungi"/>
</dbReference>
<dbReference type="PANTHER" id="PTHR28013">
    <property type="entry name" value="PROTEIN DCV1-RELATED"/>
    <property type="match status" value="1"/>
</dbReference>
<dbReference type="PANTHER" id="PTHR28013:SF3">
    <property type="entry name" value="PROTEIN DCV1-RELATED"/>
    <property type="match status" value="1"/>
</dbReference>
<dbReference type="Pfam" id="PF06687">
    <property type="entry name" value="SUR7"/>
    <property type="match status" value="1"/>
</dbReference>
<organism>
    <name type="scientific">Yarrowia lipolytica (strain CLIB 122 / E 150)</name>
    <name type="common">Yeast</name>
    <name type="synonym">Candida lipolytica</name>
    <dbReference type="NCBI Taxonomy" id="284591"/>
    <lineage>
        <taxon>Eukaryota</taxon>
        <taxon>Fungi</taxon>
        <taxon>Dikarya</taxon>
        <taxon>Ascomycota</taxon>
        <taxon>Saccharomycotina</taxon>
        <taxon>Dipodascomycetes</taxon>
        <taxon>Dipodascales</taxon>
        <taxon>Dipodascales incertae sedis</taxon>
        <taxon>Yarrowia</taxon>
    </lineage>
</organism>
<proteinExistence type="inferred from homology"/>
<comment type="function">
    <text evidence="4">Required for the proteolytic cleavage of the transcription factor RIM101 in response to alkaline ambient pH.</text>
</comment>
<comment type="subcellular location">
    <subcellularLocation>
        <location evidence="1">Cell membrane</location>
        <topology evidence="1">Multi-pass membrane protein</topology>
    </subcellularLocation>
</comment>
<comment type="similarity">
    <text evidence="5">Belongs to the palI/RIM9 family.</text>
</comment>
<comment type="caution">
    <text evidence="5">It is uncertain whether Met-1 or Met-5 is the initiator.</text>
</comment>
<reference key="1">
    <citation type="submission" date="2004-07" db="EMBL/GenBank/DDBJ databases">
        <title>Isolation and molecular analysis of YLRIM9/PALI, a gene encoding a putative transmembranal protein involved in the RIM pathway from Yarrowia lipolytica.</title>
        <authorList>
            <person name="Gonzalez-Lopez C.I."/>
            <person name="Blanchin-Roland S."/>
            <person name="Gaillardin C."/>
            <person name="Ruiz-Herrera J."/>
        </authorList>
    </citation>
    <scope>NUCLEOTIDE SEQUENCE [GENOMIC DNA]</scope>
    <source>
        <strain>SY12</strain>
    </source>
</reference>
<reference key="2">
    <citation type="journal article" date="2004" name="Nature">
        <title>Genome evolution in yeasts.</title>
        <authorList>
            <person name="Dujon B."/>
            <person name="Sherman D."/>
            <person name="Fischer G."/>
            <person name="Durrens P."/>
            <person name="Casaregola S."/>
            <person name="Lafontaine I."/>
            <person name="de Montigny J."/>
            <person name="Marck C."/>
            <person name="Neuveglise C."/>
            <person name="Talla E."/>
            <person name="Goffard N."/>
            <person name="Frangeul L."/>
            <person name="Aigle M."/>
            <person name="Anthouard V."/>
            <person name="Babour A."/>
            <person name="Barbe V."/>
            <person name="Barnay S."/>
            <person name="Blanchin S."/>
            <person name="Beckerich J.-M."/>
            <person name="Beyne E."/>
            <person name="Bleykasten C."/>
            <person name="Boisrame A."/>
            <person name="Boyer J."/>
            <person name="Cattolico L."/>
            <person name="Confanioleri F."/>
            <person name="de Daruvar A."/>
            <person name="Despons L."/>
            <person name="Fabre E."/>
            <person name="Fairhead C."/>
            <person name="Ferry-Dumazet H."/>
            <person name="Groppi A."/>
            <person name="Hantraye F."/>
            <person name="Hennequin C."/>
            <person name="Jauniaux N."/>
            <person name="Joyet P."/>
            <person name="Kachouri R."/>
            <person name="Kerrest A."/>
            <person name="Koszul R."/>
            <person name="Lemaire M."/>
            <person name="Lesur I."/>
            <person name="Ma L."/>
            <person name="Muller H."/>
            <person name="Nicaud J.-M."/>
            <person name="Nikolski M."/>
            <person name="Oztas S."/>
            <person name="Ozier-Kalogeropoulos O."/>
            <person name="Pellenz S."/>
            <person name="Potier S."/>
            <person name="Richard G.-F."/>
            <person name="Straub M.-L."/>
            <person name="Suleau A."/>
            <person name="Swennen D."/>
            <person name="Tekaia F."/>
            <person name="Wesolowski-Louvel M."/>
            <person name="Westhof E."/>
            <person name="Wirth B."/>
            <person name="Zeniou-Meyer M."/>
            <person name="Zivanovic Y."/>
            <person name="Bolotin-Fukuhara M."/>
            <person name="Thierry A."/>
            <person name="Bouchier C."/>
            <person name="Caudron B."/>
            <person name="Scarpelli C."/>
            <person name="Gaillardin C."/>
            <person name="Weissenbach J."/>
            <person name="Wincker P."/>
            <person name="Souciet J.-L."/>
        </authorList>
    </citation>
    <scope>NUCLEOTIDE SEQUENCE [LARGE SCALE GENOMIC DNA]</scope>
    <source>
        <strain>CLIB 122 / E 150</strain>
    </source>
</reference>
<reference key="3">
    <citation type="journal article" date="2002" name="Genetics">
        <title>Genetic control of extracellular protease synthesis in the yeast Yarrowia lipolytica.</title>
        <authorList>
            <person name="Gonzalez-Lopez C.I."/>
            <person name="Szabo R."/>
            <person name="Blanchin-Roland S."/>
            <person name="Gaillardin C."/>
        </authorList>
    </citation>
    <scope>FUNCTION</scope>
</reference>
<name>PALI_YARLI</name>
<sequence length="728" mass="77678">MGLRMKSATGLLVILLIAFALQLVAVLSVPVTKTISLGSYQDHKFGVFGYCNVKDGTCSPAGVGYNLVDSDNAGFSLPSNARHTLSNLLIVHPIATGFTLILTVLAMLAHIQGPASSSRYLLFCLVFSLPTFLLVLLSFLVDILLFVPHLDWGGWIVLAATILVAISGVVLCVMRRTLSSKKAMKKHQLDTTNELSAFSSHKHLNSFTYSSKENVPQFSELRYETSHDTSKDEEVLPLTSHVYEEPGHHVGDTSYASQGTNNSRVNLLTSEEPQAPKRESPFKDQRQDRYTPDRYGPSPDRYDQGGPGRPPNGSRGVPPRRPSNGPTPPGQGPSPTGAYGRNNNPNYNGGYNNRLPRPRGPPGSNNSSPFLGARNGPGLTPPHNLQTATTGPMQLPAGTYLPGEEPANSPDTYGPGVIPIPEIRRESKVPGASPTPPPVSGNSPPTETSESGVSRPYRGNYSRRGSEASAQTPPNAQPNPPPGGAQNYEYVPARQQWNLTTEESNATAPAPGPQPLQRNHSYDTYNPYRSETPSAPGSRAQSQGTDDNLGTLHQPVPTTVTPSNSGALNNKDSPWYSPPVDEQFRNSFIPDAPVSPSESISSNFTSVSQRGINPRYFGADGPPGGLHQGAPPPPHMRGPPPHMGMGGPNMGGHNMGGHNMGGPPPNMGPRPPYGGGGPGHGNKHDLLLSGNPDSQFQPQTRRKPGRGGRPGMSPASLMGRDTGPYSMR</sequence>
<evidence type="ECO:0000250" key="1"/>
<evidence type="ECO:0000255" key="2"/>
<evidence type="ECO:0000256" key="3">
    <source>
        <dbReference type="SAM" id="MobiDB-lite"/>
    </source>
</evidence>
<evidence type="ECO:0000269" key="4">
    <source>
    </source>
</evidence>
<evidence type="ECO:0000305" key="5"/>
<protein>
    <recommendedName>
        <fullName>pH-response regulator protein palI/RIM9</fullName>
    </recommendedName>
</protein>
<accession>Q7Z8R5</accession>
<accession>Q6C3M3</accession>
<gene>
    <name type="primary">RIM9</name>
    <name type="ordered locus">YALI0E33627g</name>
</gene>
<feature type="chain" id="PRO_0000058215" description="pH-response regulator protein palI/RIM9">
    <location>
        <begin position="1"/>
        <end position="728"/>
    </location>
</feature>
<feature type="topological domain" description="Cytoplasmic" evidence="2">
    <location>
        <begin position="1"/>
        <end position="10"/>
    </location>
</feature>
<feature type="transmembrane region" description="Helical" evidence="2">
    <location>
        <begin position="11"/>
        <end position="31"/>
    </location>
</feature>
<feature type="topological domain" description="Extracellular" evidence="2">
    <location>
        <begin position="32"/>
        <end position="87"/>
    </location>
</feature>
<feature type="transmembrane region" description="Helical" evidence="2">
    <location>
        <begin position="88"/>
        <end position="108"/>
    </location>
</feature>
<feature type="topological domain" description="Cytoplasmic" evidence="2">
    <location>
        <begin position="109"/>
        <end position="120"/>
    </location>
</feature>
<feature type="transmembrane region" description="Helical" evidence="2">
    <location>
        <begin position="121"/>
        <end position="141"/>
    </location>
</feature>
<feature type="topological domain" description="Extracellular" evidence="2">
    <location>
        <begin position="142"/>
        <end position="153"/>
    </location>
</feature>
<feature type="transmembrane region" description="Helical" evidence="2">
    <location>
        <begin position="154"/>
        <end position="174"/>
    </location>
</feature>
<feature type="topological domain" description="Cytoplasmic" evidence="2">
    <location>
        <begin position="175"/>
        <end position="728"/>
    </location>
</feature>
<feature type="region of interest" description="Disordered" evidence="3">
    <location>
        <begin position="268"/>
        <end position="728"/>
    </location>
</feature>
<feature type="compositionally biased region" description="Basic and acidic residues" evidence="3">
    <location>
        <begin position="274"/>
        <end position="292"/>
    </location>
</feature>
<feature type="compositionally biased region" description="Pro residues" evidence="3">
    <location>
        <begin position="319"/>
        <end position="332"/>
    </location>
</feature>
<feature type="compositionally biased region" description="Low complexity" evidence="3">
    <location>
        <begin position="333"/>
        <end position="355"/>
    </location>
</feature>
<feature type="compositionally biased region" description="Low complexity" evidence="3">
    <location>
        <begin position="362"/>
        <end position="372"/>
    </location>
</feature>
<feature type="compositionally biased region" description="Polar residues" evidence="3">
    <location>
        <begin position="383"/>
        <end position="392"/>
    </location>
</feature>
<feature type="compositionally biased region" description="Polar residues" evidence="3">
    <location>
        <begin position="495"/>
        <end position="507"/>
    </location>
</feature>
<feature type="compositionally biased region" description="Polar residues" evidence="3">
    <location>
        <begin position="516"/>
        <end position="548"/>
    </location>
</feature>
<feature type="compositionally biased region" description="Polar residues" evidence="3">
    <location>
        <begin position="556"/>
        <end position="572"/>
    </location>
</feature>
<feature type="compositionally biased region" description="Polar residues" evidence="3">
    <location>
        <begin position="596"/>
        <end position="611"/>
    </location>
</feature>
<feature type="compositionally biased region" description="Pro residues" evidence="3">
    <location>
        <begin position="630"/>
        <end position="642"/>
    </location>
</feature>
<feature type="compositionally biased region" description="Gly residues" evidence="3">
    <location>
        <begin position="644"/>
        <end position="660"/>
    </location>
</feature>
<feature type="compositionally biased region" description="Pro residues" evidence="3">
    <location>
        <begin position="662"/>
        <end position="672"/>
    </location>
</feature>
<feature type="sequence conflict" description="In Ref. 1; CAD98727." evidence="5" ref="1">
    <original>I</original>
    <variation>N</variation>
    <location>
        <position position="14"/>
    </location>
</feature>
<feature type="sequence conflict" description="In Ref. 1; CAD98727." evidence="5" ref="1">
    <original>S</original>
    <variation>F</variation>
    <location>
        <position position="694"/>
    </location>
</feature>
<keyword id="KW-1003">Cell membrane</keyword>
<keyword id="KW-0472">Membrane</keyword>
<keyword id="KW-1185">Reference proteome</keyword>
<keyword id="KW-0812">Transmembrane</keyword>
<keyword id="KW-1133">Transmembrane helix</keyword>